<sequence length="88" mass="10235">MALLDFFLSRKKNTANIAKERLQIIVAERRRSDAEPHYLPQLRKDILEVICKYVQIDPEMVTVQLEQKDGDISILELNVTLPEAEELK</sequence>
<name>MINE_ECOLC</name>
<feature type="chain" id="PRO_1000078636" description="Cell division topological specificity factor">
    <location>
        <begin position="1"/>
        <end position="88"/>
    </location>
</feature>
<reference key="1">
    <citation type="submission" date="2008-02" db="EMBL/GenBank/DDBJ databases">
        <title>Complete sequence of Escherichia coli C str. ATCC 8739.</title>
        <authorList>
            <person name="Copeland A."/>
            <person name="Lucas S."/>
            <person name="Lapidus A."/>
            <person name="Glavina del Rio T."/>
            <person name="Dalin E."/>
            <person name="Tice H."/>
            <person name="Bruce D."/>
            <person name="Goodwin L."/>
            <person name="Pitluck S."/>
            <person name="Kiss H."/>
            <person name="Brettin T."/>
            <person name="Detter J.C."/>
            <person name="Han C."/>
            <person name="Kuske C.R."/>
            <person name="Schmutz J."/>
            <person name="Larimer F."/>
            <person name="Land M."/>
            <person name="Hauser L."/>
            <person name="Kyrpides N."/>
            <person name="Mikhailova N."/>
            <person name="Ingram L."/>
            <person name="Richardson P."/>
        </authorList>
    </citation>
    <scope>NUCLEOTIDE SEQUENCE [LARGE SCALE GENOMIC DNA]</scope>
    <source>
        <strain>ATCC 8739 / DSM 1576 / NBRC 3972 / NCIMB 8545 / WDCM 00012 / Crooks</strain>
    </source>
</reference>
<accession>B1IUB7</accession>
<gene>
    <name evidence="1" type="primary">minE</name>
    <name type="ordered locus">EcolC_2451</name>
</gene>
<comment type="function">
    <text evidence="1">Prevents the cell division inhibition by proteins MinC and MinD at internal division sites while permitting inhibition at polar sites. This ensures cell division at the proper site by restricting the formation of a division septum at the midpoint of the long axis of the cell.</text>
</comment>
<comment type="similarity">
    <text evidence="1">Belongs to the MinE family.</text>
</comment>
<keyword id="KW-0131">Cell cycle</keyword>
<keyword id="KW-0132">Cell division</keyword>
<dbReference type="EMBL" id="CP000946">
    <property type="protein sequence ID" value="ACA78084.1"/>
    <property type="molecule type" value="Genomic_DNA"/>
</dbReference>
<dbReference type="RefSeq" id="WP_001185665.1">
    <property type="nucleotide sequence ID" value="NZ_MTFT01000016.1"/>
</dbReference>
<dbReference type="SMR" id="B1IUB7"/>
<dbReference type="GeneID" id="93776260"/>
<dbReference type="KEGG" id="ecl:EcolC_2451"/>
<dbReference type="HOGENOM" id="CLU_137929_2_2_6"/>
<dbReference type="GO" id="GO:0051301">
    <property type="term" value="P:cell division"/>
    <property type="evidence" value="ECO:0007669"/>
    <property type="project" value="UniProtKB-KW"/>
</dbReference>
<dbReference type="GO" id="GO:0032955">
    <property type="term" value="P:regulation of division septum assembly"/>
    <property type="evidence" value="ECO:0007669"/>
    <property type="project" value="InterPro"/>
</dbReference>
<dbReference type="FunFam" id="3.30.1070.10:FF:000001">
    <property type="entry name" value="Cell division topological specificity factor"/>
    <property type="match status" value="1"/>
</dbReference>
<dbReference type="Gene3D" id="3.30.1070.10">
    <property type="entry name" value="Cell division topological specificity factor MinE"/>
    <property type="match status" value="1"/>
</dbReference>
<dbReference type="HAMAP" id="MF_00262">
    <property type="entry name" value="MinE"/>
    <property type="match status" value="1"/>
</dbReference>
<dbReference type="InterPro" id="IPR005527">
    <property type="entry name" value="MinE"/>
</dbReference>
<dbReference type="InterPro" id="IPR036707">
    <property type="entry name" value="MinE_sf"/>
</dbReference>
<dbReference type="NCBIfam" id="TIGR01215">
    <property type="entry name" value="minE"/>
    <property type="match status" value="1"/>
</dbReference>
<dbReference type="NCBIfam" id="NF001422">
    <property type="entry name" value="PRK00296.1"/>
    <property type="match status" value="1"/>
</dbReference>
<dbReference type="Pfam" id="PF03776">
    <property type="entry name" value="MinE"/>
    <property type="match status" value="1"/>
</dbReference>
<dbReference type="SUPFAM" id="SSF55229">
    <property type="entry name" value="Cell division protein MinE topological specificity domain"/>
    <property type="match status" value="1"/>
</dbReference>
<evidence type="ECO:0000255" key="1">
    <source>
        <dbReference type="HAMAP-Rule" id="MF_00262"/>
    </source>
</evidence>
<protein>
    <recommendedName>
        <fullName evidence="1">Cell division topological specificity factor</fullName>
    </recommendedName>
</protein>
<organism>
    <name type="scientific">Escherichia coli (strain ATCC 8739 / DSM 1576 / NBRC 3972 / NCIMB 8545 / WDCM 00012 / Crooks)</name>
    <dbReference type="NCBI Taxonomy" id="481805"/>
    <lineage>
        <taxon>Bacteria</taxon>
        <taxon>Pseudomonadati</taxon>
        <taxon>Pseudomonadota</taxon>
        <taxon>Gammaproteobacteria</taxon>
        <taxon>Enterobacterales</taxon>
        <taxon>Enterobacteriaceae</taxon>
        <taxon>Escherichia</taxon>
    </lineage>
</organism>
<proteinExistence type="inferred from homology"/>